<feature type="chain" id="PRO_1000125350" description="Probable nicotinate-nucleotide adenylyltransferase">
    <location>
        <begin position="1"/>
        <end position="219"/>
    </location>
</feature>
<proteinExistence type="inferred from homology"/>
<reference key="1">
    <citation type="journal article" date="2009" name="J. Bacteriol.">
        <title>Complete genome sequence of Erythrobacter litoralis HTCC2594.</title>
        <authorList>
            <person name="Oh H.M."/>
            <person name="Giovannoni S.J."/>
            <person name="Ferriera S."/>
            <person name="Johnson J."/>
            <person name="Cho J.C."/>
        </authorList>
    </citation>
    <scope>NUCLEOTIDE SEQUENCE [LARGE SCALE GENOMIC DNA]</scope>
    <source>
        <strain>HTCC2594</strain>
    </source>
</reference>
<comment type="function">
    <text evidence="1">Catalyzes the reversible adenylation of nicotinate mononucleotide (NaMN) to nicotinic acid adenine dinucleotide (NaAD).</text>
</comment>
<comment type="catalytic activity">
    <reaction evidence="1">
        <text>nicotinate beta-D-ribonucleotide + ATP + H(+) = deamido-NAD(+) + diphosphate</text>
        <dbReference type="Rhea" id="RHEA:22860"/>
        <dbReference type="ChEBI" id="CHEBI:15378"/>
        <dbReference type="ChEBI" id="CHEBI:30616"/>
        <dbReference type="ChEBI" id="CHEBI:33019"/>
        <dbReference type="ChEBI" id="CHEBI:57502"/>
        <dbReference type="ChEBI" id="CHEBI:58437"/>
        <dbReference type="EC" id="2.7.7.18"/>
    </reaction>
</comment>
<comment type="pathway">
    <text evidence="1">Cofactor biosynthesis; NAD(+) biosynthesis; deamido-NAD(+) from nicotinate D-ribonucleotide: step 1/1.</text>
</comment>
<comment type="similarity">
    <text evidence="1">Belongs to the NadD family.</text>
</comment>
<organism>
    <name type="scientific">Erythrobacter litoralis (strain HTCC2594)</name>
    <dbReference type="NCBI Taxonomy" id="314225"/>
    <lineage>
        <taxon>Bacteria</taxon>
        <taxon>Pseudomonadati</taxon>
        <taxon>Pseudomonadota</taxon>
        <taxon>Alphaproteobacteria</taxon>
        <taxon>Sphingomonadales</taxon>
        <taxon>Erythrobacteraceae</taxon>
        <taxon>Erythrobacter/Porphyrobacter group</taxon>
        <taxon>Erythrobacter</taxon>
    </lineage>
</organism>
<name>NADD_ERYLH</name>
<dbReference type="EC" id="2.7.7.18" evidence="1"/>
<dbReference type="EMBL" id="CP000157">
    <property type="protein sequence ID" value="ABC64737.1"/>
    <property type="molecule type" value="Genomic_DNA"/>
</dbReference>
<dbReference type="RefSeq" id="WP_011415559.1">
    <property type="nucleotide sequence ID" value="NC_007722.1"/>
</dbReference>
<dbReference type="SMR" id="Q2N6F4"/>
<dbReference type="STRING" id="314225.ELI_13225"/>
<dbReference type="KEGG" id="eli:ELI_13225"/>
<dbReference type="eggNOG" id="COG1057">
    <property type="taxonomic scope" value="Bacteria"/>
</dbReference>
<dbReference type="HOGENOM" id="CLU_069765_2_0_5"/>
<dbReference type="OrthoDB" id="5295945at2"/>
<dbReference type="UniPathway" id="UPA00253">
    <property type="reaction ID" value="UER00332"/>
</dbReference>
<dbReference type="Proteomes" id="UP000008808">
    <property type="component" value="Chromosome"/>
</dbReference>
<dbReference type="GO" id="GO:0005524">
    <property type="term" value="F:ATP binding"/>
    <property type="evidence" value="ECO:0007669"/>
    <property type="project" value="UniProtKB-KW"/>
</dbReference>
<dbReference type="GO" id="GO:0004515">
    <property type="term" value="F:nicotinate-nucleotide adenylyltransferase activity"/>
    <property type="evidence" value="ECO:0007669"/>
    <property type="project" value="UniProtKB-UniRule"/>
</dbReference>
<dbReference type="GO" id="GO:0009435">
    <property type="term" value="P:NAD biosynthetic process"/>
    <property type="evidence" value="ECO:0007669"/>
    <property type="project" value="UniProtKB-UniRule"/>
</dbReference>
<dbReference type="CDD" id="cd02165">
    <property type="entry name" value="NMNAT"/>
    <property type="match status" value="1"/>
</dbReference>
<dbReference type="Gene3D" id="3.40.50.620">
    <property type="entry name" value="HUPs"/>
    <property type="match status" value="1"/>
</dbReference>
<dbReference type="HAMAP" id="MF_00244">
    <property type="entry name" value="NaMN_adenylyltr"/>
    <property type="match status" value="1"/>
</dbReference>
<dbReference type="InterPro" id="IPR004821">
    <property type="entry name" value="Cyt_trans-like"/>
</dbReference>
<dbReference type="InterPro" id="IPR005248">
    <property type="entry name" value="NadD/NMNAT"/>
</dbReference>
<dbReference type="InterPro" id="IPR014729">
    <property type="entry name" value="Rossmann-like_a/b/a_fold"/>
</dbReference>
<dbReference type="NCBIfam" id="NF000843">
    <property type="entry name" value="PRK00071.2-2"/>
    <property type="match status" value="1"/>
</dbReference>
<dbReference type="PANTHER" id="PTHR39321">
    <property type="entry name" value="NICOTINATE-NUCLEOTIDE ADENYLYLTRANSFERASE-RELATED"/>
    <property type="match status" value="1"/>
</dbReference>
<dbReference type="PANTHER" id="PTHR39321:SF3">
    <property type="entry name" value="PHOSPHOPANTETHEINE ADENYLYLTRANSFERASE"/>
    <property type="match status" value="1"/>
</dbReference>
<dbReference type="Pfam" id="PF01467">
    <property type="entry name" value="CTP_transf_like"/>
    <property type="match status" value="1"/>
</dbReference>
<dbReference type="SUPFAM" id="SSF52374">
    <property type="entry name" value="Nucleotidylyl transferase"/>
    <property type="match status" value="1"/>
</dbReference>
<accession>Q2N6F4</accession>
<evidence type="ECO:0000255" key="1">
    <source>
        <dbReference type="HAMAP-Rule" id="MF_00244"/>
    </source>
</evidence>
<keyword id="KW-0067">ATP-binding</keyword>
<keyword id="KW-0520">NAD</keyword>
<keyword id="KW-0547">Nucleotide-binding</keyword>
<keyword id="KW-0548">Nucleotidyltransferase</keyword>
<keyword id="KW-0662">Pyridine nucleotide biosynthesis</keyword>
<keyword id="KW-1185">Reference proteome</keyword>
<keyword id="KW-0808">Transferase</keyword>
<protein>
    <recommendedName>
        <fullName evidence="1">Probable nicotinate-nucleotide adenylyltransferase</fullName>
        <ecNumber evidence="1">2.7.7.18</ecNumber>
    </recommendedName>
    <alternativeName>
        <fullName evidence="1">Deamido-NAD(+) diphosphorylase</fullName>
    </alternativeName>
    <alternativeName>
        <fullName evidence="1">Deamido-NAD(+) pyrophosphorylase</fullName>
    </alternativeName>
    <alternativeName>
        <fullName evidence="1">Nicotinate mononucleotide adenylyltransferase</fullName>
        <shortName evidence="1">NaMN adenylyltransferase</shortName>
    </alternativeName>
</protein>
<gene>
    <name evidence="1" type="primary">nadD</name>
    <name type="ordered locus">ELI_13225</name>
</gene>
<sequence length="219" mass="24777">MSATIRTGLLGGSFNPAHGGHRRISLFALQALRLDEVWWLVSPGNPLKSADGMASHEARYRSALEQARRAPIRVTAIEAQLGTRYTVDTLRTLRGRYPRREFVWLMGADNLATFHRWKAWRDIARTMPIAVVARPGYDKDAIASPAMAWLRGHRTSAAEFRSRGRWSAPTLVTLRFDPDSRSATAIRRADPDWPSRYRSGLLFDQVTHRSIFGEREPPA</sequence>